<proteinExistence type="inferred from homology"/>
<keyword id="KW-0963">Cytoplasm</keyword>
<keyword id="KW-0378">Hydrolase</keyword>
<keyword id="KW-0645">Protease</keyword>
<keyword id="KW-1185">Reference proteome</keyword>
<keyword id="KW-0720">Serine protease</keyword>
<protein>
    <recommendedName>
        <fullName evidence="1">ATP-dependent Clp protease proteolytic subunit</fullName>
        <ecNumber evidence="1">3.4.21.92</ecNumber>
    </recommendedName>
    <alternativeName>
        <fullName evidence="1">Endopeptidase Clp</fullName>
    </alternativeName>
</protein>
<accession>A8LJA8</accession>
<comment type="function">
    <text evidence="1">Cleaves peptides in various proteins in a process that requires ATP hydrolysis. Has a chymotrypsin-like activity. Plays a major role in the degradation of misfolded proteins.</text>
</comment>
<comment type="catalytic activity">
    <reaction evidence="1">
        <text>Hydrolysis of proteins to small peptides in the presence of ATP and magnesium. alpha-casein is the usual test substrate. In the absence of ATP, only oligopeptides shorter than five residues are hydrolyzed (such as succinyl-Leu-Tyr-|-NHMec, and Leu-Tyr-Leu-|-Tyr-Trp, in which cleavage of the -Tyr-|-Leu- and -Tyr-|-Trp bonds also occurs).</text>
        <dbReference type="EC" id="3.4.21.92"/>
    </reaction>
</comment>
<comment type="subunit">
    <text evidence="1">Fourteen ClpP subunits assemble into 2 heptameric rings which stack back to back to give a disk-like structure with a central cavity, resembling the structure of eukaryotic proteasomes.</text>
</comment>
<comment type="subcellular location">
    <subcellularLocation>
        <location evidence="1">Cytoplasm</location>
    </subcellularLocation>
</comment>
<comment type="similarity">
    <text evidence="1">Belongs to the peptidase S14 family.</text>
</comment>
<organism>
    <name type="scientific">Dinoroseobacter shibae (strain DSM 16493 / NCIMB 14021 / DFL 12)</name>
    <dbReference type="NCBI Taxonomy" id="398580"/>
    <lineage>
        <taxon>Bacteria</taxon>
        <taxon>Pseudomonadati</taxon>
        <taxon>Pseudomonadota</taxon>
        <taxon>Alphaproteobacteria</taxon>
        <taxon>Rhodobacterales</taxon>
        <taxon>Roseobacteraceae</taxon>
        <taxon>Dinoroseobacter</taxon>
    </lineage>
</organism>
<reference key="1">
    <citation type="journal article" date="2010" name="ISME J.">
        <title>The complete genome sequence of the algal symbiont Dinoroseobacter shibae: a hitchhiker's guide to life in the sea.</title>
        <authorList>
            <person name="Wagner-Dobler I."/>
            <person name="Ballhausen B."/>
            <person name="Berger M."/>
            <person name="Brinkhoff T."/>
            <person name="Buchholz I."/>
            <person name="Bunk B."/>
            <person name="Cypionka H."/>
            <person name="Daniel R."/>
            <person name="Drepper T."/>
            <person name="Gerdts G."/>
            <person name="Hahnke S."/>
            <person name="Han C."/>
            <person name="Jahn D."/>
            <person name="Kalhoefer D."/>
            <person name="Kiss H."/>
            <person name="Klenk H.P."/>
            <person name="Kyrpides N."/>
            <person name="Liebl W."/>
            <person name="Liesegang H."/>
            <person name="Meincke L."/>
            <person name="Pati A."/>
            <person name="Petersen J."/>
            <person name="Piekarski T."/>
            <person name="Pommerenke C."/>
            <person name="Pradella S."/>
            <person name="Pukall R."/>
            <person name="Rabus R."/>
            <person name="Stackebrandt E."/>
            <person name="Thole S."/>
            <person name="Thompson L."/>
            <person name="Tielen P."/>
            <person name="Tomasch J."/>
            <person name="von Jan M."/>
            <person name="Wanphrut N."/>
            <person name="Wichels A."/>
            <person name="Zech H."/>
            <person name="Simon M."/>
        </authorList>
    </citation>
    <scope>NUCLEOTIDE SEQUENCE [LARGE SCALE GENOMIC DNA]</scope>
    <source>
        <strain>DSM 16493 / NCIMB 14021 / DFL 12</strain>
    </source>
</reference>
<sequence>MHDPVDTYMNLVPMVVEQTSRGERAYDIFSRLLKERIVFVNGPVHDGMSQLVVAQLLHLEAENPSKEISMYINSPGGVVTSGLSIYDTMQYIKPKVSTLVVGQAASMGSLLLTAGEKGMRFSLPNSRIMVHQPSGGYQGQATDIMIHAQETQKLKDRLNQIYVKHTGQPLKKVVDALERDNFMDAEQAKEWGLIDEIVESRANEDTSK</sequence>
<feature type="chain" id="PRO_1000080889" description="ATP-dependent Clp protease proteolytic subunit">
    <location>
        <begin position="1"/>
        <end position="208"/>
    </location>
</feature>
<feature type="active site" description="Nucleophile" evidence="1">
    <location>
        <position position="106"/>
    </location>
</feature>
<feature type="active site" evidence="1">
    <location>
        <position position="131"/>
    </location>
</feature>
<name>CLPP_DINSH</name>
<evidence type="ECO:0000255" key="1">
    <source>
        <dbReference type="HAMAP-Rule" id="MF_00444"/>
    </source>
</evidence>
<dbReference type="EC" id="3.4.21.92" evidence="1"/>
<dbReference type="EMBL" id="CP000830">
    <property type="protein sequence ID" value="ABV93130.1"/>
    <property type="molecule type" value="Genomic_DNA"/>
</dbReference>
<dbReference type="RefSeq" id="WP_012178060.1">
    <property type="nucleotide sequence ID" value="NC_009952.1"/>
</dbReference>
<dbReference type="SMR" id="A8LJA8"/>
<dbReference type="STRING" id="398580.Dshi_1388"/>
<dbReference type="MEROPS" id="S14.001"/>
<dbReference type="KEGG" id="dsh:Dshi_1388"/>
<dbReference type="eggNOG" id="COG0740">
    <property type="taxonomic scope" value="Bacteria"/>
</dbReference>
<dbReference type="HOGENOM" id="CLU_058707_3_2_5"/>
<dbReference type="OrthoDB" id="9802800at2"/>
<dbReference type="Proteomes" id="UP000006833">
    <property type="component" value="Chromosome"/>
</dbReference>
<dbReference type="GO" id="GO:0005737">
    <property type="term" value="C:cytoplasm"/>
    <property type="evidence" value="ECO:0007669"/>
    <property type="project" value="UniProtKB-SubCell"/>
</dbReference>
<dbReference type="GO" id="GO:0009368">
    <property type="term" value="C:endopeptidase Clp complex"/>
    <property type="evidence" value="ECO:0007669"/>
    <property type="project" value="TreeGrafter"/>
</dbReference>
<dbReference type="GO" id="GO:0004176">
    <property type="term" value="F:ATP-dependent peptidase activity"/>
    <property type="evidence" value="ECO:0007669"/>
    <property type="project" value="InterPro"/>
</dbReference>
<dbReference type="GO" id="GO:0051117">
    <property type="term" value="F:ATPase binding"/>
    <property type="evidence" value="ECO:0007669"/>
    <property type="project" value="TreeGrafter"/>
</dbReference>
<dbReference type="GO" id="GO:0004252">
    <property type="term" value="F:serine-type endopeptidase activity"/>
    <property type="evidence" value="ECO:0007669"/>
    <property type="project" value="UniProtKB-UniRule"/>
</dbReference>
<dbReference type="GO" id="GO:0006515">
    <property type="term" value="P:protein quality control for misfolded or incompletely synthesized proteins"/>
    <property type="evidence" value="ECO:0007669"/>
    <property type="project" value="TreeGrafter"/>
</dbReference>
<dbReference type="CDD" id="cd07017">
    <property type="entry name" value="S14_ClpP_2"/>
    <property type="match status" value="1"/>
</dbReference>
<dbReference type="FunFam" id="3.90.226.10:FF:000001">
    <property type="entry name" value="ATP-dependent Clp protease proteolytic subunit"/>
    <property type="match status" value="1"/>
</dbReference>
<dbReference type="Gene3D" id="3.90.226.10">
    <property type="entry name" value="2-enoyl-CoA Hydratase, Chain A, domain 1"/>
    <property type="match status" value="1"/>
</dbReference>
<dbReference type="HAMAP" id="MF_00444">
    <property type="entry name" value="ClpP"/>
    <property type="match status" value="1"/>
</dbReference>
<dbReference type="InterPro" id="IPR001907">
    <property type="entry name" value="ClpP"/>
</dbReference>
<dbReference type="InterPro" id="IPR029045">
    <property type="entry name" value="ClpP/crotonase-like_dom_sf"/>
</dbReference>
<dbReference type="InterPro" id="IPR023562">
    <property type="entry name" value="ClpP/TepA"/>
</dbReference>
<dbReference type="InterPro" id="IPR033135">
    <property type="entry name" value="ClpP_His_AS"/>
</dbReference>
<dbReference type="InterPro" id="IPR018215">
    <property type="entry name" value="ClpP_Ser_AS"/>
</dbReference>
<dbReference type="NCBIfam" id="NF001368">
    <property type="entry name" value="PRK00277.1"/>
    <property type="match status" value="1"/>
</dbReference>
<dbReference type="NCBIfam" id="NF009205">
    <property type="entry name" value="PRK12553.1"/>
    <property type="match status" value="1"/>
</dbReference>
<dbReference type="PANTHER" id="PTHR10381">
    <property type="entry name" value="ATP-DEPENDENT CLP PROTEASE PROTEOLYTIC SUBUNIT"/>
    <property type="match status" value="1"/>
</dbReference>
<dbReference type="PANTHER" id="PTHR10381:SF70">
    <property type="entry name" value="ATP-DEPENDENT CLP PROTEASE PROTEOLYTIC SUBUNIT"/>
    <property type="match status" value="1"/>
</dbReference>
<dbReference type="Pfam" id="PF00574">
    <property type="entry name" value="CLP_protease"/>
    <property type="match status" value="1"/>
</dbReference>
<dbReference type="PRINTS" id="PR00127">
    <property type="entry name" value="CLPPROTEASEP"/>
</dbReference>
<dbReference type="SUPFAM" id="SSF52096">
    <property type="entry name" value="ClpP/crotonase"/>
    <property type="match status" value="1"/>
</dbReference>
<dbReference type="PROSITE" id="PS00382">
    <property type="entry name" value="CLP_PROTEASE_HIS"/>
    <property type="match status" value="1"/>
</dbReference>
<dbReference type="PROSITE" id="PS00381">
    <property type="entry name" value="CLP_PROTEASE_SER"/>
    <property type="match status" value="1"/>
</dbReference>
<gene>
    <name evidence="1" type="primary">clpP</name>
    <name type="ordered locus">Dshi_1388</name>
</gene>